<protein>
    <recommendedName>
        <fullName evidence="1">Phosphopentomutase</fullName>
        <ecNumber evidence="1">5.4.2.7</ecNumber>
    </recommendedName>
    <alternativeName>
        <fullName evidence="1">Phosphodeoxyribomutase</fullName>
    </alternativeName>
</protein>
<feature type="chain" id="PRO_0000199831" description="Phosphopentomutase">
    <location>
        <begin position="1"/>
        <end position="392"/>
    </location>
</feature>
<feature type="binding site" evidence="1">
    <location>
        <position position="13"/>
    </location>
    <ligand>
        <name>Mn(2+)</name>
        <dbReference type="ChEBI" id="CHEBI:29035"/>
        <label>1</label>
    </ligand>
</feature>
<feature type="binding site" evidence="1">
    <location>
        <position position="286"/>
    </location>
    <ligand>
        <name>Mn(2+)</name>
        <dbReference type="ChEBI" id="CHEBI:29035"/>
        <label>2</label>
    </ligand>
</feature>
<feature type="binding site" evidence="1">
    <location>
        <position position="291"/>
    </location>
    <ligand>
        <name>Mn(2+)</name>
        <dbReference type="ChEBI" id="CHEBI:29035"/>
        <label>2</label>
    </ligand>
</feature>
<feature type="binding site" evidence="1">
    <location>
        <position position="327"/>
    </location>
    <ligand>
        <name>Mn(2+)</name>
        <dbReference type="ChEBI" id="CHEBI:29035"/>
        <label>1</label>
    </ligand>
</feature>
<feature type="binding site" evidence="1">
    <location>
        <position position="328"/>
    </location>
    <ligand>
        <name>Mn(2+)</name>
        <dbReference type="ChEBI" id="CHEBI:29035"/>
        <label>1</label>
    </ligand>
</feature>
<feature type="binding site" evidence="1">
    <location>
        <position position="339"/>
    </location>
    <ligand>
        <name>Mn(2+)</name>
        <dbReference type="ChEBI" id="CHEBI:29035"/>
        <label>2</label>
    </ligand>
</feature>
<reference key="1">
    <citation type="journal article" date="2002" name="Nucleic Acids Res.">
        <title>Genome sequence of Oceanobacillus iheyensis isolated from the Iheya Ridge and its unexpected adaptive capabilities to extreme environments.</title>
        <authorList>
            <person name="Takami H."/>
            <person name="Takaki Y."/>
            <person name="Uchiyama I."/>
        </authorList>
    </citation>
    <scope>NUCLEOTIDE SEQUENCE [LARGE SCALE GENOMIC DNA]</scope>
    <source>
        <strain>DSM 14371 / CIP 107618 / JCM 11309 / KCTC 3954 / HTE831</strain>
    </source>
</reference>
<comment type="function">
    <text evidence="1">Isomerase that catalyzes the conversion of deoxy-ribose 1-phosphate (dRib-1-P) and ribose 1-phosphate (Rib-1-P) to deoxy-ribose 5-phosphate (dRib-5-P) and ribose 5-phosphate (Rib-5-P), respectively.</text>
</comment>
<comment type="catalytic activity">
    <reaction evidence="1">
        <text>2-deoxy-alpha-D-ribose 1-phosphate = 2-deoxy-D-ribose 5-phosphate</text>
        <dbReference type="Rhea" id="RHEA:27658"/>
        <dbReference type="ChEBI" id="CHEBI:57259"/>
        <dbReference type="ChEBI" id="CHEBI:62877"/>
        <dbReference type="EC" id="5.4.2.7"/>
    </reaction>
</comment>
<comment type="catalytic activity">
    <reaction evidence="1">
        <text>alpha-D-ribose 1-phosphate = D-ribose 5-phosphate</text>
        <dbReference type="Rhea" id="RHEA:18793"/>
        <dbReference type="ChEBI" id="CHEBI:57720"/>
        <dbReference type="ChEBI" id="CHEBI:78346"/>
        <dbReference type="EC" id="5.4.2.7"/>
    </reaction>
</comment>
<comment type="cofactor">
    <cofactor evidence="1">
        <name>Mn(2+)</name>
        <dbReference type="ChEBI" id="CHEBI:29035"/>
    </cofactor>
    <text evidence="1">Binds 2 manganese ions.</text>
</comment>
<comment type="pathway">
    <text evidence="1">Carbohydrate degradation; 2-deoxy-D-ribose 1-phosphate degradation; D-glyceraldehyde 3-phosphate and acetaldehyde from 2-deoxy-alpha-D-ribose 1-phosphate: step 1/2.</text>
</comment>
<comment type="subcellular location">
    <subcellularLocation>
        <location evidence="1">Cytoplasm</location>
    </subcellularLocation>
</comment>
<comment type="similarity">
    <text evidence="1">Belongs to the phosphopentomutase family.</text>
</comment>
<organism>
    <name type="scientific">Oceanobacillus iheyensis (strain DSM 14371 / CIP 107618 / JCM 11309 / KCTC 3954 / HTE831)</name>
    <dbReference type="NCBI Taxonomy" id="221109"/>
    <lineage>
        <taxon>Bacteria</taxon>
        <taxon>Bacillati</taxon>
        <taxon>Bacillota</taxon>
        <taxon>Bacilli</taxon>
        <taxon>Bacillales</taxon>
        <taxon>Bacillaceae</taxon>
        <taxon>Oceanobacillus</taxon>
    </lineage>
</organism>
<sequence length="392" mass="43994">MNNFKRVFLIVMDSVGIGEAPDARDFNDVGANTLGHIAENMNGLNMPTMASLGLSNIRKIEGIEASAQPRAHYTKMQEASNGKDTMTGHWEIMGLHIEKPFRTFPDGFPDELIEELEQKTGRKVIGNKPASGTEILDELGQQHMDTGSLIVYTSADSVLQIAAHEEIIPIDEQYRICEIARELTLDEKYMVGRVIARPFIGEPGAFERTSNRHDYALKPFGRTVMNELKDNNYDVLALGKISDIYDGEGVTESIRTKDNNDGMVQLRKSMDKSFTGLNFLNLVDFDAKYGHRRDPVGYGKALEEFDEQLPEIIEQLHDDDLLIITADHGNDPIHHGTDHTREYVPLVVYHNQIKQAKELPIRKTFADIGATIADNFGIKLPEHGESFLNDIK</sequence>
<evidence type="ECO:0000255" key="1">
    <source>
        <dbReference type="HAMAP-Rule" id="MF_00740"/>
    </source>
</evidence>
<name>DEOB_OCEIH</name>
<proteinExistence type="inferred from homology"/>
<keyword id="KW-0963">Cytoplasm</keyword>
<keyword id="KW-0413">Isomerase</keyword>
<keyword id="KW-0464">Manganese</keyword>
<keyword id="KW-0479">Metal-binding</keyword>
<keyword id="KW-1185">Reference proteome</keyword>
<gene>
    <name evidence="1" type="primary">deoB</name>
    <name type="synonym">drm</name>
    <name type="ordered locus">OB1846</name>
</gene>
<accession>Q8EQ67</accession>
<dbReference type="EC" id="5.4.2.7" evidence="1"/>
<dbReference type="EMBL" id="BA000028">
    <property type="protein sequence ID" value="BAC13802.1"/>
    <property type="molecule type" value="Genomic_DNA"/>
</dbReference>
<dbReference type="RefSeq" id="WP_011066242.1">
    <property type="nucleotide sequence ID" value="NC_004193.1"/>
</dbReference>
<dbReference type="SMR" id="Q8EQ67"/>
<dbReference type="STRING" id="221109.gene:10734086"/>
<dbReference type="KEGG" id="oih:OB1846"/>
<dbReference type="eggNOG" id="COG1015">
    <property type="taxonomic scope" value="Bacteria"/>
</dbReference>
<dbReference type="HOGENOM" id="CLU_053861_0_0_9"/>
<dbReference type="OrthoDB" id="9769930at2"/>
<dbReference type="PhylomeDB" id="Q8EQ67"/>
<dbReference type="UniPathway" id="UPA00002">
    <property type="reaction ID" value="UER00467"/>
</dbReference>
<dbReference type="Proteomes" id="UP000000822">
    <property type="component" value="Chromosome"/>
</dbReference>
<dbReference type="GO" id="GO:0005829">
    <property type="term" value="C:cytosol"/>
    <property type="evidence" value="ECO:0007669"/>
    <property type="project" value="TreeGrafter"/>
</dbReference>
<dbReference type="GO" id="GO:0000287">
    <property type="term" value="F:magnesium ion binding"/>
    <property type="evidence" value="ECO:0007669"/>
    <property type="project" value="InterPro"/>
</dbReference>
<dbReference type="GO" id="GO:0030145">
    <property type="term" value="F:manganese ion binding"/>
    <property type="evidence" value="ECO:0007669"/>
    <property type="project" value="UniProtKB-UniRule"/>
</dbReference>
<dbReference type="GO" id="GO:0008973">
    <property type="term" value="F:phosphopentomutase activity"/>
    <property type="evidence" value="ECO:0007669"/>
    <property type="project" value="UniProtKB-UniRule"/>
</dbReference>
<dbReference type="GO" id="GO:0006018">
    <property type="term" value="P:2-deoxyribose 1-phosphate catabolic process"/>
    <property type="evidence" value="ECO:0007669"/>
    <property type="project" value="UniProtKB-UniRule"/>
</dbReference>
<dbReference type="GO" id="GO:0006015">
    <property type="term" value="P:5-phosphoribose 1-diphosphate biosynthetic process"/>
    <property type="evidence" value="ECO:0007669"/>
    <property type="project" value="UniProtKB-UniPathway"/>
</dbReference>
<dbReference type="GO" id="GO:0043094">
    <property type="term" value="P:metabolic compound salvage"/>
    <property type="evidence" value="ECO:0007669"/>
    <property type="project" value="InterPro"/>
</dbReference>
<dbReference type="GO" id="GO:0009117">
    <property type="term" value="P:nucleotide metabolic process"/>
    <property type="evidence" value="ECO:0007669"/>
    <property type="project" value="InterPro"/>
</dbReference>
<dbReference type="CDD" id="cd16009">
    <property type="entry name" value="PPM"/>
    <property type="match status" value="1"/>
</dbReference>
<dbReference type="FunFam" id="3.30.70.1250:FF:000001">
    <property type="entry name" value="Phosphopentomutase"/>
    <property type="match status" value="1"/>
</dbReference>
<dbReference type="Gene3D" id="3.40.720.10">
    <property type="entry name" value="Alkaline Phosphatase, subunit A"/>
    <property type="match status" value="1"/>
</dbReference>
<dbReference type="Gene3D" id="3.30.70.1250">
    <property type="entry name" value="Phosphopentomutase"/>
    <property type="match status" value="1"/>
</dbReference>
<dbReference type="HAMAP" id="MF_00740">
    <property type="entry name" value="Phosphopentomut"/>
    <property type="match status" value="1"/>
</dbReference>
<dbReference type="InterPro" id="IPR017850">
    <property type="entry name" value="Alkaline_phosphatase_core_sf"/>
</dbReference>
<dbReference type="InterPro" id="IPR010045">
    <property type="entry name" value="DeoB"/>
</dbReference>
<dbReference type="InterPro" id="IPR006124">
    <property type="entry name" value="Metalloenzyme"/>
</dbReference>
<dbReference type="InterPro" id="IPR024052">
    <property type="entry name" value="Phosphopentomutase_DeoB_cap_sf"/>
</dbReference>
<dbReference type="NCBIfam" id="TIGR01696">
    <property type="entry name" value="deoB"/>
    <property type="match status" value="1"/>
</dbReference>
<dbReference type="NCBIfam" id="NF003766">
    <property type="entry name" value="PRK05362.1"/>
    <property type="match status" value="1"/>
</dbReference>
<dbReference type="PANTHER" id="PTHR21110">
    <property type="entry name" value="PHOSPHOPENTOMUTASE"/>
    <property type="match status" value="1"/>
</dbReference>
<dbReference type="PANTHER" id="PTHR21110:SF0">
    <property type="entry name" value="PHOSPHOPENTOMUTASE"/>
    <property type="match status" value="1"/>
</dbReference>
<dbReference type="Pfam" id="PF01676">
    <property type="entry name" value="Metalloenzyme"/>
    <property type="match status" value="1"/>
</dbReference>
<dbReference type="PIRSF" id="PIRSF001491">
    <property type="entry name" value="Ppentomutase"/>
    <property type="match status" value="1"/>
</dbReference>
<dbReference type="SUPFAM" id="SSF53649">
    <property type="entry name" value="Alkaline phosphatase-like"/>
    <property type="match status" value="1"/>
</dbReference>
<dbReference type="SUPFAM" id="SSF143856">
    <property type="entry name" value="DeoB insert domain-like"/>
    <property type="match status" value="1"/>
</dbReference>